<name>RM02_RECAM</name>
<sequence>MILKKYKPTTPSLRGLVQIDRSLLWKGDPVKKLTVGMIESAGRNNTGRITVYHRGGGHKTKYRYIDFKRSNYNIPGIVERLEYDPNRTCFIALIKDNENNFSYILAPHDLKVGDTVITGNDIDIRIGNTLPLRNIPIGTMIHNIELNPGKGGKIVRSAGSSAQLISKDENGFCMLKLPSGEYRLFPNNSLATIGILSNIDNKNIKIGKAGRSRWMGRRPIVRGVAMNPVDHPHGGGEGKTSGGRPSVTPWSWPTKGQPTRSKRKYNKLIVQRAKKKI</sequence>
<geneLocation type="mitochondrion"/>
<feature type="chain" id="PRO_0000129741" description="Large ribosomal subunit protein uL2m">
    <location>
        <begin position="1"/>
        <end position="277"/>
    </location>
</feature>
<feature type="region of interest" description="Disordered" evidence="1">
    <location>
        <begin position="225"/>
        <end position="263"/>
    </location>
</feature>
<feature type="compositionally biased region" description="Polar residues" evidence="1">
    <location>
        <begin position="248"/>
        <end position="259"/>
    </location>
</feature>
<keyword id="KW-0496">Mitochondrion</keyword>
<keyword id="KW-0687">Ribonucleoprotein</keyword>
<keyword id="KW-0689">Ribosomal protein</keyword>
<reference key="1">
    <citation type="journal article" date="1997" name="Nature">
        <title>An ancestral mitochondrial DNA resembling a eubacterial genome in miniature.</title>
        <authorList>
            <person name="Lang B.F."/>
            <person name="Burger G."/>
            <person name="O'Kelly C.J."/>
            <person name="Cedergren R."/>
            <person name="Golding G.B."/>
            <person name="Lemieux C."/>
            <person name="Sankoff D."/>
            <person name="Turmel M."/>
            <person name="Gray M.W."/>
        </authorList>
    </citation>
    <scope>NUCLEOTIDE SEQUENCE [GENOMIC DNA]</scope>
    <source>
        <strain>ATCC 50394</strain>
    </source>
</reference>
<evidence type="ECO:0000256" key="1">
    <source>
        <dbReference type="SAM" id="MobiDB-lite"/>
    </source>
</evidence>
<evidence type="ECO:0000305" key="2"/>
<comment type="subcellular location">
    <subcellularLocation>
        <location>Mitochondrion</location>
    </subcellularLocation>
</comment>
<comment type="similarity">
    <text evidence="2">Belongs to the universal ribosomal protein uL2 family.</text>
</comment>
<accession>O21247</accession>
<gene>
    <name type="primary">RPL2</name>
</gene>
<protein>
    <recommendedName>
        <fullName evidence="2">Large ribosomal subunit protein uL2m</fullName>
    </recommendedName>
    <alternativeName>
        <fullName>60S ribosomal protein L2, mitochondrial</fullName>
    </alternativeName>
</protein>
<proteinExistence type="inferred from homology"/>
<dbReference type="EMBL" id="AF007261">
    <property type="protein sequence ID" value="AAD11874.2"/>
    <property type="molecule type" value="Genomic_DNA"/>
</dbReference>
<dbReference type="PIR" id="S78141">
    <property type="entry name" value="S78141"/>
</dbReference>
<dbReference type="RefSeq" id="NP_044759.2">
    <property type="nucleotide sequence ID" value="NC_001823.1"/>
</dbReference>
<dbReference type="SMR" id="O21247"/>
<dbReference type="GeneID" id="801091"/>
<dbReference type="GO" id="GO:0005762">
    <property type="term" value="C:mitochondrial large ribosomal subunit"/>
    <property type="evidence" value="ECO:0007669"/>
    <property type="project" value="TreeGrafter"/>
</dbReference>
<dbReference type="GO" id="GO:0003723">
    <property type="term" value="F:RNA binding"/>
    <property type="evidence" value="ECO:0007669"/>
    <property type="project" value="InterPro"/>
</dbReference>
<dbReference type="GO" id="GO:0003735">
    <property type="term" value="F:structural constituent of ribosome"/>
    <property type="evidence" value="ECO:0007669"/>
    <property type="project" value="InterPro"/>
</dbReference>
<dbReference type="GO" id="GO:0016740">
    <property type="term" value="F:transferase activity"/>
    <property type="evidence" value="ECO:0007669"/>
    <property type="project" value="InterPro"/>
</dbReference>
<dbReference type="GO" id="GO:0032543">
    <property type="term" value="P:mitochondrial translation"/>
    <property type="evidence" value="ECO:0007669"/>
    <property type="project" value="TreeGrafter"/>
</dbReference>
<dbReference type="FunFam" id="2.30.30.30:FF:000001">
    <property type="entry name" value="50S ribosomal protein L2"/>
    <property type="match status" value="1"/>
</dbReference>
<dbReference type="FunFam" id="4.10.950.10:FF:000001">
    <property type="entry name" value="50S ribosomal protein L2"/>
    <property type="match status" value="1"/>
</dbReference>
<dbReference type="Gene3D" id="2.30.30.30">
    <property type="match status" value="1"/>
</dbReference>
<dbReference type="Gene3D" id="2.40.50.140">
    <property type="entry name" value="Nucleic acid-binding proteins"/>
    <property type="match status" value="1"/>
</dbReference>
<dbReference type="Gene3D" id="4.10.950.10">
    <property type="entry name" value="Ribosomal protein L2, domain 3"/>
    <property type="match status" value="1"/>
</dbReference>
<dbReference type="HAMAP" id="MF_01320_B">
    <property type="entry name" value="Ribosomal_uL2_B"/>
    <property type="match status" value="1"/>
</dbReference>
<dbReference type="InterPro" id="IPR012340">
    <property type="entry name" value="NA-bd_OB-fold"/>
</dbReference>
<dbReference type="InterPro" id="IPR014722">
    <property type="entry name" value="Rib_uL2_dom2"/>
</dbReference>
<dbReference type="InterPro" id="IPR002171">
    <property type="entry name" value="Ribosomal_uL2"/>
</dbReference>
<dbReference type="InterPro" id="IPR005880">
    <property type="entry name" value="Ribosomal_uL2_bac/org-type"/>
</dbReference>
<dbReference type="InterPro" id="IPR022669">
    <property type="entry name" value="Ribosomal_uL2_C"/>
</dbReference>
<dbReference type="InterPro" id="IPR022671">
    <property type="entry name" value="Ribosomal_uL2_CS"/>
</dbReference>
<dbReference type="InterPro" id="IPR014726">
    <property type="entry name" value="Ribosomal_uL2_dom3"/>
</dbReference>
<dbReference type="InterPro" id="IPR022666">
    <property type="entry name" value="Ribosomal_uL2_RNA-bd_dom"/>
</dbReference>
<dbReference type="InterPro" id="IPR008991">
    <property type="entry name" value="Translation_prot_SH3-like_sf"/>
</dbReference>
<dbReference type="NCBIfam" id="TIGR01171">
    <property type="entry name" value="rplB_bact"/>
    <property type="match status" value="1"/>
</dbReference>
<dbReference type="PANTHER" id="PTHR13691:SF5">
    <property type="entry name" value="LARGE RIBOSOMAL SUBUNIT PROTEIN UL2M"/>
    <property type="match status" value="1"/>
</dbReference>
<dbReference type="PANTHER" id="PTHR13691">
    <property type="entry name" value="RIBOSOMAL PROTEIN L2"/>
    <property type="match status" value="1"/>
</dbReference>
<dbReference type="Pfam" id="PF00181">
    <property type="entry name" value="Ribosomal_L2"/>
    <property type="match status" value="1"/>
</dbReference>
<dbReference type="Pfam" id="PF03947">
    <property type="entry name" value="Ribosomal_L2_C"/>
    <property type="match status" value="1"/>
</dbReference>
<dbReference type="PIRSF" id="PIRSF002158">
    <property type="entry name" value="Ribosomal_L2"/>
    <property type="match status" value="1"/>
</dbReference>
<dbReference type="SMART" id="SM01383">
    <property type="entry name" value="Ribosomal_L2"/>
    <property type="match status" value="1"/>
</dbReference>
<dbReference type="SMART" id="SM01382">
    <property type="entry name" value="Ribosomal_L2_C"/>
    <property type="match status" value="1"/>
</dbReference>
<dbReference type="SUPFAM" id="SSF50249">
    <property type="entry name" value="Nucleic acid-binding proteins"/>
    <property type="match status" value="1"/>
</dbReference>
<dbReference type="SUPFAM" id="SSF50104">
    <property type="entry name" value="Translation proteins SH3-like domain"/>
    <property type="match status" value="1"/>
</dbReference>
<dbReference type="PROSITE" id="PS00467">
    <property type="entry name" value="RIBOSOMAL_L2"/>
    <property type="match status" value="1"/>
</dbReference>
<organism>
    <name type="scientific">Reclinomonas americana</name>
    <dbReference type="NCBI Taxonomy" id="48483"/>
    <lineage>
        <taxon>Eukaryota</taxon>
        <taxon>Discoba</taxon>
        <taxon>Jakobida</taxon>
        <taxon>Histionina</taxon>
        <taxon>Histionidae</taxon>
        <taxon>Reclinomonas</taxon>
    </lineage>
</organism>